<dbReference type="EC" id="3.5.1.5" evidence="1"/>
<dbReference type="EMBL" id="CP000010">
    <property type="protein sequence ID" value="AAU50301.1"/>
    <property type="molecule type" value="Genomic_DNA"/>
</dbReference>
<dbReference type="RefSeq" id="WP_004186513.1">
    <property type="nucleotide sequence ID" value="NC_006348.1"/>
</dbReference>
<dbReference type="RefSeq" id="YP_103748.1">
    <property type="nucleotide sequence ID" value="NC_006348.1"/>
</dbReference>
<dbReference type="SMR" id="Q62HS2"/>
<dbReference type="GeneID" id="93061237"/>
<dbReference type="KEGG" id="bma:BMA2182"/>
<dbReference type="PATRIC" id="fig|243160.12.peg.2251"/>
<dbReference type="eggNOG" id="COG0831">
    <property type="taxonomic scope" value="Bacteria"/>
</dbReference>
<dbReference type="HOGENOM" id="CLU_145825_1_0_4"/>
<dbReference type="UniPathway" id="UPA00258">
    <property type="reaction ID" value="UER00370"/>
</dbReference>
<dbReference type="Proteomes" id="UP000006693">
    <property type="component" value="Chromosome 1"/>
</dbReference>
<dbReference type="GO" id="GO:0005737">
    <property type="term" value="C:cytoplasm"/>
    <property type="evidence" value="ECO:0007669"/>
    <property type="project" value="UniProtKB-SubCell"/>
</dbReference>
<dbReference type="GO" id="GO:0016151">
    <property type="term" value="F:nickel cation binding"/>
    <property type="evidence" value="ECO:0007669"/>
    <property type="project" value="InterPro"/>
</dbReference>
<dbReference type="GO" id="GO:0009039">
    <property type="term" value="F:urease activity"/>
    <property type="evidence" value="ECO:0007669"/>
    <property type="project" value="UniProtKB-UniRule"/>
</dbReference>
<dbReference type="GO" id="GO:0043419">
    <property type="term" value="P:urea catabolic process"/>
    <property type="evidence" value="ECO:0007669"/>
    <property type="project" value="UniProtKB-UniRule"/>
</dbReference>
<dbReference type="CDD" id="cd00390">
    <property type="entry name" value="Urease_gamma"/>
    <property type="match status" value="1"/>
</dbReference>
<dbReference type="Gene3D" id="3.30.280.10">
    <property type="entry name" value="Urease, gamma-like subunit"/>
    <property type="match status" value="1"/>
</dbReference>
<dbReference type="HAMAP" id="MF_00739">
    <property type="entry name" value="Urease_gamma"/>
    <property type="match status" value="1"/>
</dbReference>
<dbReference type="InterPro" id="IPR012010">
    <property type="entry name" value="Urease_gamma"/>
</dbReference>
<dbReference type="InterPro" id="IPR002026">
    <property type="entry name" value="Urease_gamma/gamma-beta_su"/>
</dbReference>
<dbReference type="InterPro" id="IPR036463">
    <property type="entry name" value="Urease_gamma_sf"/>
</dbReference>
<dbReference type="InterPro" id="IPR050069">
    <property type="entry name" value="Urease_subunit"/>
</dbReference>
<dbReference type="NCBIfam" id="NF009712">
    <property type="entry name" value="PRK13241.1"/>
    <property type="match status" value="1"/>
</dbReference>
<dbReference type="NCBIfam" id="TIGR00193">
    <property type="entry name" value="urease_gam"/>
    <property type="match status" value="1"/>
</dbReference>
<dbReference type="PANTHER" id="PTHR33569">
    <property type="entry name" value="UREASE"/>
    <property type="match status" value="1"/>
</dbReference>
<dbReference type="PANTHER" id="PTHR33569:SF1">
    <property type="entry name" value="UREASE"/>
    <property type="match status" value="1"/>
</dbReference>
<dbReference type="Pfam" id="PF00547">
    <property type="entry name" value="Urease_gamma"/>
    <property type="match status" value="1"/>
</dbReference>
<dbReference type="PIRSF" id="PIRSF001223">
    <property type="entry name" value="Urease_gamma"/>
    <property type="match status" value="1"/>
</dbReference>
<dbReference type="SUPFAM" id="SSF54111">
    <property type="entry name" value="Urease, gamma-subunit"/>
    <property type="match status" value="1"/>
</dbReference>
<sequence>MKLTPREKDKLLIFTAALLAERRRARGLKLNYPETVAFITAALMEAARDGRTVAEVMHYGTTLLTRDDVMEGVPEMIPDIQVEATFPDGTKLVTVHHPIP</sequence>
<proteinExistence type="inferred from homology"/>
<reference key="1">
    <citation type="journal article" date="2004" name="Proc. Natl. Acad. Sci. U.S.A.">
        <title>Structural flexibility in the Burkholderia mallei genome.</title>
        <authorList>
            <person name="Nierman W.C."/>
            <person name="DeShazer D."/>
            <person name="Kim H.S."/>
            <person name="Tettelin H."/>
            <person name="Nelson K.E."/>
            <person name="Feldblyum T.V."/>
            <person name="Ulrich R.L."/>
            <person name="Ronning C.M."/>
            <person name="Brinkac L.M."/>
            <person name="Daugherty S.C."/>
            <person name="Davidsen T.D."/>
            <person name="DeBoy R.T."/>
            <person name="Dimitrov G."/>
            <person name="Dodson R.J."/>
            <person name="Durkin A.S."/>
            <person name="Gwinn M.L."/>
            <person name="Haft D.H."/>
            <person name="Khouri H.M."/>
            <person name="Kolonay J.F."/>
            <person name="Madupu R."/>
            <person name="Mohammoud Y."/>
            <person name="Nelson W.C."/>
            <person name="Radune D."/>
            <person name="Romero C.M."/>
            <person name="Sarria S."/>
            <person name="Selengut J."/>
            <person name="Shamblin C."/>
            <person name="Sullivan S.A."/>
            <person name="White O."/>
            <person name="Yu Y."/>
            <person name="Zafar N."/>
            <person name="Zhou L."/>
            <person name="Fraser C.M."/>
        </authorList>
    </citation>
    <scope>NUCLEOTIDE SEQUENCE [LARGE SCALE GENOMIC DNA]</scope>
    <source>
        <strain>ATCC 23344</strain>
    </source>
</reference>
<accession>Q62HS2</accession>
<gene>
    <name evidence="1" type="primary">ureA</name>
    <name type="ordered locus">BMA2182</name>
</gene>
<organism>
    <name type="scientific">Burkholderia mallei (strain ATCC 23344)</name>
    <dbReference type="NCBI Taxonomy" id="243160"/>
    <lineage>
        <taxon>Bacteria</taxon>
        <taxon>Pseudomonadati</taxon>
        <taxon>Pseudomonadota</taxon>
        <taxon>Betaproteobacteria</taxon>
        <taxon>Burkholderiales</taxon>
        <taxon>Burkholderiaceae</taxon>
        <taxon>Burkholderia</taxon>
        <taxon>pseudomallei group</taxon>
    </lineage>
</organism>
<evidence type="ECO:0000255" key="1">
    <source>
        <dbReference type="HAMAP-Rule" id="MF_00739"/>
    </source>
</evidence>
<protein>
    <recommendedName>
        <fullName evidence="1">Urease subunit gamma</fullName>
        <ecNumber evidence="1">3.5.1.5</ecNumber>
    </recommendedName>
    <alternativeName>
        <fullName evidence="1">Urea amidohydrolase subunit gamma</fullName>
    </alternativeName>
</protein>
<name>URE3_BURMA</name>
<feature type="chain" id="PRO_0000098005" description="Urease subunit gamma">
    <location>
        <begin position="1"/>
        <end position="100"/>
    </location>
</feature>
<keyword id="KW-0963">Cytoplasm</keyword>
<keyword id="KW-0378">Hydrolase</keyword>
<keyword id="KW-1185">Reference proteome</keyword>
<comment type="catalytic activity">
    <reaction evidence="1">
        <text>urea + 2 H2O + H(+) = hydrogencarbonate + 2 NH4(+)</text>
        <dbReference type="Rhea" id="RHEA:20557"/>
        <dbReference type="ChEBI" id="CHEBI:15377"/>
        <dbReference type="ChEBI" id="CHEBI:15378"/>
        <dbReference type="ChEBI" id="CHEBI:16199"/>
        <dbReference type="ChEBI" id="CHEBI:17544"/>
        <dbReference type="ChEBI" id="CHEBI:28938"/>
        <dbReference type="EC" id="3.5.1.5"/>
    </reaction>
</comment>
<comment type="pathway">
    <text evidence="1">Nitrogen metabolism; urea degradation; CO(2) and NH(3) from urea (urease route): step 1/1.</text>
</comment>
<comment type="subunit">
    <text evidence="1">Heterotrimer of UreA (gamma), UreB (beta) and UreC (alpha) subunits. Three heterotrimers associate to form the active enzyme.</text>
</comment>
<comment type="subcellular location">
    <subcellularLocation>
        <location evidence="1">Cytoplasm</location>
    </subcellularLocation>
</comment>
<comment type="similarity">
    <text evidence="1">Belongs to the urease gamma subunit family.</text>
</comment>